<sequence>MRHRVAHRKFSRTSAHRMAMLLNMCISLIKHERISTTLPKAKELRPYVEKLITIGKVYHGKNLVYGKRLLISKIKNPDAANKLIDVLSIRYKSRNGGYTRIIKNGFRKGDSAPMAIIELVDRQIATVENNGS</sequence>
<protein>
    <recommendedName>
        <fullName evidence="1">Large ribosomal subunit protein bL17</fullName>
    </recommendedName>
    <alternativeName>
        <fullName evidence="2">50S ribosomal protein L17</fullName>
    </alternativeName>
</protein>
<comment type="subunit">
    <text evidence="1">Part of the 50S ribosomal subunit. Contacts protein L32.</text>
</comment>
<comment type="similarity">
    <text evidence="1">Belongs to the bacterial ribosomal protein bL17 family.</text>
</comment>
<gene>
    <name evidence="1" type="primary">rplQ</name>
    <name type="ordered locus">Ecaj_0588</name>
</gene>
<evidence type="ECO:0000255" key="1">
    <source>
        <dbReference type="HAMAP-Rule" id="MF_01368"/>
    </source>
</evidence>
<evidence type="ECO:0000305" key="2"/>
<name>RL17_EHRCJ</name>
<accession>Q3YRN3</accession>
<feature type="chain" id="PRO_1000055818" description="Large ribosomal subunit protein bL17">
    <location>
        <begin position="1"/>
        <end position="132"/>
    </location>
</feature>
<proteinExistence type="inferred from homology"/>
<organism>
    <name type="scientific">Ehrlichia canis (strain Jake)</name>
    <dbReference type="NCBI Taxonomy" id="269484"/>
    <lineage>
        <taxon>Bacteria</taxon>
        <taxon>Pseudomonadati</taxon>
        <taxon>Pseudomonadota</taxon>
        <taxon>Alphaproteobacteria</taxon>
        <taxon>Rickettsiales</taxon>
        <taxon>Anaplasmataceae</taxon>
        <taxon>Ehrlichia</taxon>
    </lineage>
</organism>
<reference key="1">
    <citation type="journal article" date="2006" name="J. Bacteriol.">
        <title>The genome of the obligately intracellular bacterium Ehrlichia canis reveals themes of complex membrane structure and immune evasion strategies.</title>
        <authorList>
            <person name="Mavromatis K."/>
            <person name="Doyle C.K."/>
            <person name="Lykidis A."/>
            <person name="Ivanova N."/>
            <person name="Francino M.P."/>
            <person name="Chain P."/>
            <person name="Shin M."/>
            <person name="Malfatti S."/>
            <person name="Larimer F."/>
            <person name="Copeland A."/>
            <person name="Detter J.C."/>
            <person name="Land M."/>
            <person name="Richardson P.M."/>
            <person name="Yu X.J."/>
            <person name="Walker D.H."/>
            <person name="McBride J.W."/>
            <person name="Kyrpides N.C."/>
        </authorList>
    </citation>
    <scope>NUCLEOTIDE SEQUENCE [LARGE SCALE GENOMIC DNA]</scope>
    <source>
        <strain>Jake</strain>
    </source>
</reference>
<dbReference type="EMBL" id="CP000107">
    <property type="protein sequence ID" value="AAZ68622.1"/>
    <property type="molecule type" value="Genomic_DNA"/>
</dbReference>
<dbReference type="RefSeq" id="WP_011304700.1">
    <property type="nucleotide sequence ID" value="NC_007354.1"/>
</dbReference>
<dbReference type="SMR" id="Q3YRN3"/>
<dbReference type="FunCoup" id="Q3YRN3">
    <property type="interactions" value="355"/>
</dbReference>
<dbReference type="STRING" id="269484.Ecaj_0588"/>
<dbReference type="KEGG" id="ecn:Ecaj_0588"/>
<dbReference type="eggNOG" id="COG0203">
    <property type="taxonomic scope" value="Bacteria"/>
</dbReference>
<dbReference type="HOGENOM" id="CLU_074407_2_0_5"/>
<dbReference type="InParanoid" id="Q3YRN3"/>
<dbReference type="Proteomes" id="UP000000435">
    <property type="component" value="Chromosome"/>
</dbReference>
<dbReference type="GO" id="GO:0022625">
    <property type="term" value="C:cytosolic large ribosomal subunit"/>
    <property type="evidence" value="ECO:0007669"/>
    <property type="project" value="TreeGrafter"/>
</dbReference>
<dbReference type="GO" id="GO:0003735">
    <property type="term" value="F:structural constituent of ribosome"/>
    <property type="evidence" value="ECO:0007669"/>
    <property type="project" value="InterPro"/>
</dbReference>
<dbReference type="GO" id="GO:0006412">
    <property type="term" value="P:translation"/>
    <property type="evidence" value="ECO:0007669"/>
    <property type="project" value="UniProtKB-UniRule"/>
</dbReference>
<dbReference type="Gene3D" id="3.90.1030.10">
    <property type="entry name" value="Ribosomal protein L17"/>
    <property type="match status" value="1"/>
</dbReference>
<dbReference type="HAMAP" id="MF_01368">
    <property type="entry name" value="Ribosomal_bL17"/>
    <property type="match status" value="1"/>
</dbReference>
<dbReference type="InterPro" id="IPR000456">
    <property type="entry name" value="Ribosomal_bL17"/>
</dbReference>
<dbReference type="InterPro" id="IPR047859">
    <property type="entry name" value="Ribosomal_bL17_CS"/>
</dbReference>
<dbReference type="InterPro" id="IPR036373">
    <property type="entry name" value="Ribosomal_bL17_sf"/>
</dbReference>
<dbReference type="NCBIfam" id="TIGR00059">
    <property type="entry name" value="L17"/>
    <property type="match status" value="1"/>
</dbReference>
<dbReference type="PANTHER" id="PTHR14413:SF16">
    <property type="entry name" value="LARGE RIBOSOMAL SUBUNIT PROTEIN BL17M"/>
    <property type="match status" value="1"/>
</dbReference>
<dbReference type="PANTHER" id="PTHR14413">
    <property type="entry name" value="RIBOSOMAL PROTEIN L17"/>
    <property type="match status" value="1"/>
</dbReference>
<dbReference type="Pfam" id="PF01196">
    <property type="entry name" value="Ribosomal_L17"/>
    <property type="match status" value="1"/>
</dbReference>
<dbReference type="SUPFAM" id="SSF64263">
    <property type="entry name" value="Prokaryotic ribosomal protein L17"/>
    <property type="match status" value="1"/>
</dbReference>
<dbReference type="PROSITE" id="PS01167">
    <property type="entry name" value="RIBOSOMAL_L17"/>
    <property type="match status" value="1"/>
</dbReference>
<keyword id="KW-0687">Ribonucleoprotein</keyword>
<keyword id="KW-0689">Ribosomal protein</keyword>